<protein>
    <recommendedName>
        <fullName>Bifunctional oligoribonuclease and PAP phosphatase NrnA</fullName>
        <ecNumber>3.1.-.-</ecNumber>
    </recommendedName>
    <alternativeName>
        <fullName>3'(2'),5'-bisphosphate nucleotidase</fullName>
        <ecNumber>3.1.3.7</ecNumber>
    </alternativeName>
    <alternativeName>
        <fullName>3'-phosphoadenosine 5'-phosphate phosphatase</fullName>
        <shortName>PAP phosphatase</shortName>
    </alternativeName>
    <alternativeName>
        <fullName>nanoRNase</fullName>
    </alternativeName>
</protein>
<comment type="function">
    <text evidence="1">Bifunctional enzyme which has both oligoribonuclease and pAp-phosphatase activities. Degrades RNA oligonucleotides with a length of 5 nucleotides and shorter, with a preference for 2-mers. Also degrades 24-mers. Converts 3'(2')-phosphoadenosine 5'-phosphate (PAP) to AMP.</text>
</comment>
<comment type="catalytic activity">
    <reaction>
        <text>adenosine 3',5'-bisphosphate + H2O = AMP + phosphate</text>
        <dbReference type="Rhea" id="RHEA:10040"/>
        <dbReference type="ChEBI" id="CHEBI:15377"/>
        <dbReference type="ChEBI" id="CHEBI:43474"/>
        <dbReference type="ChEBI" id="CHEBI:58343"/>
        <dbReference type="ChEBI" id="CHEBI:456215"/>
        <dbReference type="EC" id="3.1.3.7"/>
    </reaction>
</comment>
<comment type="cofactor">
    <cofactor evidence="1">
        <name>Mn(2+)</name>
        <dbReference type="ChEBI" id="CHEBI:29035"/>
    </cofactor>
</comment>
<comment type="miscellaneous">
    <text>In accordance with its dual activities, is able to complement both orn and cysQ mutants in E.coli.</text>
</comment>
<comment type="miscellaneous">
    <text>Was identified as a high-confidence drug target.</text>
</comment>
<comment type="similarity">
    <text evidence="2">Belongs to the NrnA oligoribonuclease family.</text>
</comment>
<organism>
    <name type="scientific">Mycobacterium tuberculosis (strain ATCC 25618 / H37Rv)</name>
    <dbReference type="NCBI Taxonomy" id="83332"/>
    <lineage>
        <taxon>Bacteria</taxon>
        <taxon>Bacillati</taxon>
        <taxon>Actinomycetota</taxon>
        <taxon>Actinomycetes</taxon>
        <taxon>Mycobacteriales</taxon>
        <taxon>Mycobacteriaceae</taxon>
        <taxon>Mycobacterium</taxon>
        <taxon>Mycobacterium tuberculosis complex</taxon>
    </lineage>
</organism>
<keyword id="KW-0002">3D-structure</keyword>
<keyword id="KW-0269">Exonuclease</keyword>
<keyword id="KW-0378">Hydrolase</keyword>
<keyword id="KW-0540">Nuclease</keyword>
<keyword id="KW-1185">Reference proteome</keyword>
<name>NRNA_MYCTU</name>
<feature type="chain" id="PRO_0000419753" description="Bifunctional oligoribonuclease and PAP phosphatase NrnA">
    <location>
        <begin position="1"/>
        <end position="336"/>
    </location>
</feature>
<feature type="helix" evidence="3">
    <location>
        <begin position="23"/>
        <end position="32"/>
    </location>
</feature>
<feature type="strand" evidence="3">
    <location>
        <begin position="34"/>
        <end position="40"/>
    </location>
</feature>
<feature type="helix" evidence="3">
    <location>
        <begin position="46"/>
        <end position="61"/>
    </location>
</feature>
<feature type="strand" evidence="3">
    <location>
        <begin position="65"/>
        <end position="69"/>
    </location>
</feature>
<feature type="strand" evidence="3">
    <location>
        <begin position="72"/>
        <end position="75"/>
    </location>
</feature>
<feature type="helix" evidence="3">
    <location>
        <begin position="78"/>
        <end position="82"/>
    </location>
</feature>
<feature type="helix" evidence="3">
    <location>
        <begin position="86"/>
        <end position="88"/>
    </location>
</feature>
<feature type="helix" evidence="3">
    <location>
        <begin position="92"/>
        <end position="94"/>
    </location>
</feature>
<feature type="strand" evidence="3">
    <location>
        <begin position="100"/>
        <end position="106"/>
    </location>
</feature>
<feature type="helix" evidence="3">
    <location>
        <begin position="110"/>
        <end position="121"/>
    </location>
</feature>
<feature type="strand" evidence="3">
    <location>
        <begin position="126"/>
        <end position="130"/>
    </location>
</feature>
<feature type="strand" evidence="3">
    <location>
        <begin position="139"/>
        <end position="144"/>
    </location>
</feature>
<feature type="strand" evidence="3">
    <location>
        <begin position="148"/>
        <end position="150"/>
    </location>
</feature>
<feature type="helix" evidence="3">
    <location>
        <begin position="151"/>
        <end position="162"/>
    </location>
</feature>
<feature type="helix" evidence="3">
    <location>
        <begin position="168"/>
        <end position="181"/>
    </location>
</feature>
<feature type="turn" evidence="3">
    <location>
        <begin position="182"/>
        <end position="186"/>
    </location>
</feature>
<feature type="helix" evidence="3">
    <location>
        <begin position="190"/>
        <end position="202"/>
    </location>
</feature>
<feature type="helix" evidence="3">
    <location>
        <begin position="206"/>
        <end position="214"/>
    </location>
</feature>
<feature type="helix" evidence="3">
    <location>
        <begin position="221"/>
        <end position="230"/>
    </location>
</feature>
<feature type="strand" evidence="3">
    <location>
        <begin position="233"/>
        <end position="235"/>
    </location>
</feature>
<feature type="turn" evidence="3">
    <location>
        <begin position="236"/>
        <end position="238"/>
    </location>
</feature>
<feature type="helix" evidence="3">
    <location>
        <begin position="239"/>
        <end position="241"/>
    </location>
</feature>
<feature type="strand" evidence="3">
    <location>
        <begin position="244"/>
        <end position="249"/>
    </location>
</feature>
<feature type="helix" evidence="3">
    <location>
        <begin position="251"/>
        <end position="256"/>
    </location>
</feature>
<feature type="helix" evidence="3">
    <location>
        <begin position="259"/>
        <end position="263"/>
    </location>
</feature>
<feature type="helix" evidence="3">
    <location>
        <begin position="266"/>
        <end position="269"/>
    </location>
</feature>
<feature type="strand" evidence="3">
    <location>
        <begin position="276"/>
        <end position="285"/>
    </location>
</feature>
<feature type="strand" evidence="3">
    <location>
        <begin position="288"/>
        <end position="298"/>
    </location>
</feature>
<feature type="helix" evidence="3">
    <location>
        <begin position="301"/>
        <end position="306"/>
    </location>
</feature>
<feature type="strand" evidence="3">
    <location>
        <begin position="310"/>
        <end position="312"/>
    </location>
</feature>
<feature type="strand" evidence="3">
    <location>
        <begin position="315"/>
        <end position="322"/>
    </location>
</feature>
<feature type="helix" evidence="3">
    <location>
        <begin position="324"/>
        <end position="336"/>
    </location>
</feature>
<gene>
    <name type="primary">nrnA</name>
    <name type="ordered locus">Rv2837c</name>
</gene>
<dbReference type="EC" id="3.1.-.-"/>
<dbReference type="EC" id="3.1.3.7"/>
<dbReference type="EMBL" id="AL123456">
    <property type="protein sequence ID" value="CCP45638.1"/>
    <property type="molecule type" value="Genomic_DNA"/>
</dbReference>
<dbReference type="PIR" id="H70693">
    <property type="entry name" value="H70693"/>
</dbReference>
<dbReference type="RefSeq" id="NP_217353.1">
    <property type="nucleotide sequence ID" value="NC_000962.3"/>
</dbReference>
<dbReference type="RefSeq" id="WP_003414507.1">
    <property type="nucleotide sequence ID" value="NZ_NVQJ01000006.1"/>
</dbReference>
<dbReference type="PDB" id="5CET">
    <property type="method" value="X-ray"/>
    <property type="resolution" value="2.00 A"/>
    <property type="chains" value="A=10-336"/>
</dbReference>
<dbReference type="PDB" id="5JJU">
    <property type="method" value="X-ray"/>
    <property type="resolution" value="2.31 A"/>
    <property type="chains" value="A/B=10-336"/>
</dbReference>
<dbReference type="PDBsum" id="5CET"/>
<dbReference type="PDBsum" id="5JJU"/>
<dbReference type="SMR" id="P71615"/>
<dbReference type="STRING" id="83332.Rv2837c"/>
<dbReference type="PaxDb" id="83332-Rv2837c"/>
<dbReference type="DNASU" id="888920"/>
<dbReference type="GeneID" id="45426824"/>
<dbReference type="GeneID" id="888920"/>
<dbReference type="KEGG" id="mtu:Rv2837c"/>
<dbReference type="KEGG" id="mtv:RVBD_2837c"/>
<dbReference type="PATRIC" id="fig|83332.111.peg.3155"/>
<dbReference type="TubercuList" id="Rv2837c"/>
<dbReference type="eggNOG" id="COG0618">
    <property type="taxonomic scope" value="Bacteria"/>
</dbReference>
<dbReference type="InParanoid" id="P71615"/>
<dbReference type="OrthoDB" id="9803668at2"/>
<dbReference type="PhylomeDB" id="P71615"/>
<dbReference type="BRENDA" id="3.1.3.7">
    <property type="organism ID" value="3445"/>
</dbReference>
<dbReference type="BRENDA" id="3.1.4.59">
    <property type="organism ID" value="3445"/>
</dbReference>
<dbReference type="EvolutionaryTrace" id="P71615"/>
<dbReference type="Proteomes" id="UP000001584">
    <property type="component" value="Chromosome"/>
</dbReference>
<dbReference type="GO" id="GO:0008441">
    <property type="term" value="F:3'(2'),5'-bisphosphate nucleotidase activity"/>
    <property type="evidence" value="ECO:0007669"/>
    <property type="project" value="UniProtKB-EC"/>
</dbReference>
<dbReference type="GO" id="GO:0004527">
    <property type="term" value="F:exonuclease activity"/>
    <property type="evidence" value="ECO:0007669"/>
    <property type="project" value="UniProtKB-KW"/>
</dbReference>
<dbReference type="GO" id="GO:0003676">
    <property type="term" value="F:nucleic acid binding"/>
    <property type="evidence" value="ECO:0007669"/>
    <property type="project" value="InterPro"/>
</dbReference>
<dbReference type="Gene3D" id="3.10.310.30">
    <property type="match status" value="1"/>
</dbReference>
<dbReference type="Gene3D" id="3.90.1640.10">
    <property type="entry name" value="inorganic pyrophosphatase (n-terminal core)"/>
    <property type="match status" value="1"/>
</dbReference>
<dbReference type="InterPro" id="IPR001667">
    <property type="entry name" value="DDH_dom"/>
</dbReference>
<dbReference type="InterPro" id="IPR038763">
    <property type="entry name" value="DHH_sf"/>
</dbReference>
<dbReference type="InterPro" id="IPR003156">
    <property type="entry name" value="DHHA1_dom"/>
</dbReference>
<dbReference type="InterPro" id="IPR051319">
    <property type="entry name" value="Oligoribo/pAp-PDE_c-di-AMP_PDE"/>
</dbReference>
<dbReference type="PANTHER" id="PTHR47618">
    <property type="entry name" value="BIFUNCTIONAL OLIGORIBONUCLEASE AND PAP PHOSPHATASE NRNA"/>
    <property type="match status" value="1"/>
</dbReference>
<dbReference type="PANTHER" id="PTHR47618:SF1">
    <property type="entry name" value="BIFUNCTIONAL OLIGORIBONUCLEASE AND PAP PHOSPHATASE NRNA"/>
    <property type="match status" value="1"/>
</dbReference>
<dbReference type="Pfam" id="PF01368">
    <property type="entry name" value="DHH"/>
    <property type="match status" value="1"/>
</dbReference>
<dbReference type="Pfam" id="PF02272">
    <property type="entry name" value="DHHA1"/>
    <property type="match status" value="1"/>
</dbReference>
<dbReference type="SUPFAM" id="SSF64182">
    <property type="entry name" value="DHH phosphoesterases"/>
    <property type="match status" value="1"/>
</dbReference>
<reference key="1">
    <citation type="journal article" date="1998" name="Nature">
        <title>Deciphering the biology of Mycobacterium tuberculosis from the complete genome sequence.</title>
        <authorList>
            <person name="Cole S.T."/>
            <person name="Brosch R."/>
            <person name="Parkhill J."/>
            <person name="Garnier T."/>
            <person name="Churcher C.M."/>
            <person name="Harris D.E."/>
            <person name="Gordon S.V."/>
            <person name="Eiglmeier K."/>
            <person name="Gas S."/>
            <person name="Barry C.E. III"/>
            <person name="Tekaia F."/>
            <person name="Badcock K."/>
            <person name="Basham D."/>
            <person name="Brown D."/>
            <person name="Chillingworth T."/>
            <person name="Connor R."/>
            <person name="Davies R.M."/>
            <person name="Devlin K."/>
            <person name="Feltwell T."/>
            <person name="Gentles S."/>
            <person name="Hamlin N."/>
            <person name="Holroyd S."/>
            <person name="Hornsby T."/>
            <person name="Jagels K."/>
            <person name="Krogh A."/>
            <person name="McLean J."/>
            <person name="Moule S."/>
            <person name="Murphy L.D."/>
            <person name="Oliver S."/>
            <person name="Osborne J."/>
            <person name="Quail M.A."/>
            <person name="Rajandream M.A."/>
            <person name="Rogers J."/>
            <person name="Rutter S."/>
            <person name="Seeger K."/>
            <person name="Skelton S."/>
            <person name="Squares S."/>
            <person name="Squares R."/>
            <person name="Sulston J.E."/>
            <person name="Taylor K."/>
            <person name="Whitehead S."/>
            <person name="Barrell B.G."/>
        </authorList>
    </citation>
    <scope>NUCLEOTIDE SEQUENCE [LARGE SCALE GENOMIC DNA]</scope>
    <source>
        <strain>ATCC 25618 / H37Rv</strain>
    </source>
</reference>
<reference key="2">
    <citation type="journal article" date="2011" name="Mol. Cell. Proteomics">
        <title>Proteogenomic analysis of Mycobacterium tuberculosis by high resolution mass spectrometry.</title>
        <authorList>
            <person name="Kelkar D.S."/>
            <person name="Kumar D."/>
            <person name="Kumar P."/>
            <person name="Balakrishnan L."/>
            <person name="Muthusamy B."/>
            <person name="Yadav A.K."/>
            <person name="Shrivastava P."/>
            <person name="Marimuthu A."/>
            <person name="Anand S."/>
            <person name="Sundaram H."/>
            <person name="Kingsbury R."/>
            <person name="Harsha H.C."/>
            <person name="Nair B."/>
            <person name="Prasad T.S."/>
            <person name="Chauhan D.S."/>
            <person name="Katoch K."/>
            <person name="Katoch V.M."/>
            <person name="Kumar P."/>
            <person name="Chaerkady R."/>
            <person name="Ramachandran S."/>
            <person name="Dash D."/>
            <person name="Pandey A."/>
        </authorList>
    </citation>
    <scope>IDENTIFICATION BY MASS SPECTROMETRY [LARGE SCALE ANALYSIS]</scope>
    <source>
        <strain>ATCC 25618 / H37Rv</strain>
    </source>
</reference>
<reference key="3">
    <citation type="journal article" date="2012" name="RNA">
        <title>Characterization of NrnA homologs from Mycobacterium tuberculosis and Mycoplasma pneumoniae.</title>
        <authorList>
            <person name="Postic G."/>
            <person name="Danchin A."/>
            <person name="Mechold U."/>
        </authorList>
    </citation>
    <scope>FUNCTION AS AN OLIGORIBONUCLEASE</scope>
    <scope>FUNCTION AS A PAP PHOSPHATASE</scope>
    <scope>COFACTOR</scope>
    <source>
        <strain>ATCC 25618 / H37Rv</strain>
    </source>
</reference>
<reference key="4">
    <citation type="journal article" date="2008" name="BMC Syst. Biol.">
        <title>targetTB: a target identification pipeline for Mycobacterium tuberculosis through an interactome, reactome and genome-scale structural analysis.</title>
        <authorList>
            <person name="Raman K."/>
            <person name="Yeturu K."/>
            <person name="Chandra N."/>
        </authorList>
    </citation>
    <scope>IDENTIFICATION AS A DRUG TARGET [LARGE SCALE ANALYSIS]</scope>
</reference>
<accession>P71615</accession>
<accession>F2GL96</accession>
<accession>L0TDH8</accession>
<proteinExistence type="evidence at protein level"/>
<evidence type="ECO:0000269" key="1">
    <source>
    </source>
</evidence>
<evidence type="ECO:0000305" key="2"/>
<evidence type="ECO:0007829" key="3">
    <source>
        <dbReference type="PDB" id="5CET"/>
    </source>
</evidence>
<sequence length="336" mass="35415">MTTIDPRSELVDGRRRAGARVDAVGAAALLSAAARVGVVCHVHPDADTIGAGLALALVLDGCGKRVEVSFAAPATLPESLRSLPGCHLLVRPEVMRRDVDLVVTVDIPSVDRLGALGDLTDSGRELLVIDHHASNDLFGTANFIDPSADSTTTMVAEILDAWGKPIDPRVAHCIYAGLATDTGSFRWASVRGYRLAARLVEIGVDNATVSRTLMDSHPFTWLPLLSRVLGSAQLVSEAVGGRGLVYVVVDNREWVAARSEEVESIVDIVRTTQQAEVAAVFKEVEPHRWSVSMRAKTVNLAAVASGFGGGGHRLAAGYTTTGSIDDAVASLRAALG</sequence>